<organism>
    <name type="scientific">Aspergillus fumigatus (strain ATCC MYA-4609 / CBS 101355 / FGSC A1100 / Af293)</name>
    <name type="common">Neosartorya fumigata</name>
    <dbReference type="NCBI Taxonomy" id="330879"/>
    <lineage>
        <taxon>Eukaryota</taxon>
        <taxon>Fungi</taxon>
        <taxon>Dikarya</taxon>
        <taxon>Ascomycota</taxon>
        <taxon>Pezizomycotina</taxon>
        <taxon>Eurotiomycetes</taxon>
        <taxon>Eurotiomycetidae</taxon>
        <taxon>Eurotiales</taxon>
        <taxon>Aspergillaceae</taxon>
        <taxon>Aspergillus</taxon>
        <taxon>Aspergillus subgen. Fumigati</taxon>
    </lineage>
</organism>
<name>PYR4_ASPFU</name>
<sequence>MDGWSDLSSAPPQYREVAGIADWALLAQGLGWSINYLAMIYHSYKDRTYGMAILPLCCNFAWEFVYSVIYPSHNSAERAVLTTWMILNLFVMYTAIKFAPNEWQHAPLVRQCLPWIFPVAIAAFTAGHLALAATVGVSKAANWGAFLCFELLTSGAVCQLMSRGSSRGASYTIWLSRFLGSYIGGIFLHVRETHWPQEFGWISHPFVTWHGLMCFSLDIAYVTFLWRIRRQEHRSQRKKAL</sequence>
<keyword id="KW-0456">Lyase</keyword>
<keyword id="KW-0472">Membrane</keyword>
<keyword id="KW-1185">Reference proteome</keyword>
<keyword id="KW-0812">Transmembrane</keyword>
<keyword id="KW-1133">Transmembrane helix</keyword>
<proteinExistence type="evidence at protein level"/>
<comment type="function">
    <text evidence="4 8 9">Terpene cyclase; part of the gene cluster that mediates the biosynthesis of pyripyropene A, a specific human acyl-coenzyme A:cholesterol acyltransferase 2 inhibitor (PubMed:20861902). The first step of the pathway is the synthesis of nicotinyl-CoA from nicotinic acid by the nicotinic acid-CoA ligase pyr1 (PubMed:20861902). Nicotinyl-CoA is then a substrate of polyketide synthase pyr2 to produce 4-hydroxy-6-(3-pyridinyl)-2H-pyran-2-one (HPPO) which is further prenylated by the polyprenyl transferase pyr6 to yield farnesyl-HPPO (PubMed:20861902). The next steps consist of an epoxidation of farnesyl-HPPO to epoxyfarnesyl-HPPO by FAD-dependent monooxygenase pyr5 and a cyclization of the terpenoid portion by the terpene cyclase pyr4 to yield deacetyl-pyripyropene E (PubMed:20861902). The 2 cytochrome P450 monooxygenases pyr3 and pyr9, and the 2 acetyltransferases pyr7 and pyr8 are involved in the conversion of deacetyl-pyripyropene E into pyripyropene A through several cycles of oxidation and acetylation steps (PubMed:20861902). Pyr7 acetylates deacetyl-pyripyropene E to pyripyropene E which is oxidized to 11-deacetyl-pyripyropene O by pyr3, which is in turn acetylated into pyripyropene O by pyr8 (PubMed:21224862, PubMed:26019565). Pyripyropene O is then oxidized to deacetyl-pyripyropene A by pyr9 (PubMed:21224862). Deacetyl-pyripyropene A is finally acetylated to pyripyropene A by pyr8 (PubMed:26019565).</text>
</comment>
<comment type="catalytic activity">
    <reaction evidence="4">
        <text>2-oxo-3-[(8S)-epoxy-(2E,6E)-farnesyl]-6-(pyridin-3-yl)-2H-pyran-4-olate + H(+) = deacetylpyripyropene E</text>
        <dbReference type="Rhea" id="RHEA:64348"/>
        <dbReference type="ChEBI" id="CHEBI:15378"/>
        <dbReference type="ChEBI" id="CHEBI:149709"/>
        <dbReference type="ChEBI" id="CHEBI:149710"/>
    </reaction>
    <physiologicalReaction direction="left-to-right" evidence="4">
        <dbReference type="Rhea" id="RHEA:64349"/>
    </physiologicalReaction>
</comment>
<comment type="pathway">
    <text evidence="4">Secondary metabolite biosynthesis; terpenoid biosynthesis.</text>
</comment>
<comment type="subcellular location">
    <subcellularLocation>
        <location evidence="1">Membrane</location>
        <topology evidence="1">Multi-pass membrane protein</topology>
    </subcellularLocation>
</comment>
<comment type="biotechnology">
    <text evidence="2 3 5">Pyripyropene A and its derivatives have very unique characteristics of selectively inhibiting the acyl-coenzyme A:cholesterol acyltransferase 2 (ACAT2) isozyme (PubMed:18997389). Therefore, pyripyropenes are expected to be developed as a new type of anti-atherosclerotic agent (PubMed:18997389). Furthermore, pyripyropenes have been shown to exhibit anti-angiogenic activity against human umbilical vein endothelial cells (PubMed:19571395). Finally, pyripyropene A also exhibits insecticidal properties (PubMed:8534106).</text>
</comment>
<comment type="similarity">
    <text evidence="7">Belongs to the paxB family.</text>
</comment>
<gene>
    <name evidence="6" type="primary">pyr4</name>
    <name type="ORF">AFUA_6G13950</name>
</gene>
<protein>
    <recommendedName>
        <fullName evidence="6">Terpene cyclase pyr4</fullName>
        <ecNumber evidence="4">4.2.3.-</ecNumber>
    </recommendedName>
    <alternativeName>
        <fullName evidence="6">Pyripyropene synthesis protein 4</fullName>
    </alternativeName>
</protein>
<feature type="chain" id="PRO_0000436679" description="Terpene cyclase pyr4">
    <location>
        <begin position="1"/>
        <end position="241"/>
    </location>
</feature>
<feature type="transmembrane region" description="Helical" evidence="1">
    <location>
        <begin position="20"/>
        <end position="40"/>
    </location>
</feature>
<feature type="transmembrane region" description="Helical" evidence="1">
    <location>
        <begin position="49"/>
        <end position="69"/>
    </location>
</feature>
<feature type="transmembrane region" description="Helical" evidence="1">
    <location>
        <begin position="79"/>
        <end position="99"/>
    </location>
</feature>
<feature type="transmembrane region" description="Helical" evidence="1">
    <location>
        <begin position="113"/>
        <end position="133"/>
    </location>
</feature>
<feature type="transmembrane region" description="Helical" evidence="1">
    <location>
        <begin position="141"/>
        <end position="161"/>
    </location>
</feature>
<feature type="transmembrane region" description="Helical" evidence="1">
    <location>
        <begin position="168"/>
        <end position="188"/>
    </location>
</feature>
<feature type="transmembrane region" description="Helical" evidence="1">
    <location>
        <begin position="206"/>
        <end position="226"/>
    </location>
</feature>
<feature type="mutagenesis site" description="Completely abolishes the cyclase activity." evidence="4">
    <original>E</original>
    <variation>A</variation>
    <variation>Q</variation>
    <location>
        <position position="63"/>
    </location>
</feature>
<feature type="mutagenesis site" description="Completely abolishes the cyclase activity." evidence="4">
    <original>D</original>
    <variation>A</variation>
    <variation>N</variation>
    <location>
        <position position="218"/>
    </location>
</feature>
<reference key="1">
    <citation type="journal article" date="2005" name="Nature">
        <title>Genomic sequence of the pathogenic and allergenic filamentous fungus Aspergillus fumigatus.</title>
        <authorList>
            <person name="Nierman W.C."/>
            <person name="Pain A."/>
            <person name="Anderson M.J."/>
            <person name="Wortman J.R."/>
            <person name="Kim H.S."/>
            <person name="Arroyo J."/>
            <person name="Berriman M."/>
            <person name="Abe K."/>
            <person name="Archer D.B."/>
            <person name="Bermejo C."/>
            <person name="Bennett J.W."/>
            <person name="Bowyer P."/>
            <person name="Chen D."/>
            <person name="Collins M."/>
            <person name="Coulsen R."/>
            <person name="Davies R."/>
            <person name="Dyer P.S."/>
            <person name="Farman M.L."/>
            <person name="Fedorova N."/>
            <person name="Fedorova N.D."/>
            <person name="Feldblyum T.V."/>
            <person name="Fischer R."/>
            <person name="Fosker N."/>
            <person name="Fraser A."/>
            <person name="Garcia J.L."/>
            <person name="Garcia M.J."/>
            <person name="Goble A."/>
            <person name="Goldman G.H."/>
            <person name="Gomi K."/>
            <person name="Griffith-Jones S."/>
            <person name="Gwilliam R."/>
            <person name="Haas B.J."/>
            <person name="Haas H."/>
            <person name="Harris D.E."/>
            <person name="Horiuchi H."/>
            <person name="Huang J."/>
            <person name="Humphray S."/>
            <person name="Jimenez J."/>
            <person name="Keller N."/>
            <person name="Khouri H."/>
            <person name="Kitamoto K."/>
            <person name="Kobayashi T."/>
            <person name="Konzack S."/>
            <person name="Kulkarni R."/>
            <person name="Kumagai T."/>
            <person name="Lafton A."/>
            <person name="Latge J.-P."/>
            <person name="Li W."/>
            <person name="Lord A."/>
            <person name="Lu C."/>
            <person name="Majoros W.H."/>
            <person name="May G.S."/>
            <person name="Miller B.L."/>
            <person name="Mohamoud Y."/>
            <person name="Molina M."/>
            <person name="Monod M."/>
            <person name="Mouyna I."/>
            <person name="Mulligan S."/>
            <person name="Murphy L.D."/>
            <person name="O'Neil S."/>
            <person name="Paulsen I."/>
            <person name="Penalva M.A."/>
            <person name="Pertea M."/>
            <person name="Price C."/>
            <person name="Pritchard B.L."/>
            <person name="Quail M.A."/>
            <person name="Rabbinowitsch E."/>
            <person name="Rawlins N."/>
            <person name="Rajandream M.A."/>
            <person name="Reichard U."/>
            <person name="Renauld H."/>
            <person name="Robson G.D."/>
            <person name="Rodriguez de Cordoba S."/>
            <person name="Rodriguez-Pena J.M."/>
            <person name="Ronning C.M."/>
            <person name="Rutter S."/>
            <person name="Salzberg S.L."/>
            <person name="Sanchez M."/>
            <person name="Sanchez-Ferrero J.C."/>
            <person name="Saunders D."/>
            <person name="Seeger K."/>
            <person name="Squares R."/>
            <person name="Squares S."/>
            <person name="Takeuchi M."/>
            <person name="Tekaia F."/>
            <person name="Turner G."/>
            <person name="Vazquez de Aldana C.R."/>
            <person name="Weidman J."/>
            <person name="White O."/>
            <person name="Woodward J.R."/>
            <person name="Yu J.-H."/>
            <person name="Fraser C.M."/>
            <person name="Galagan J.E."/>
            <person name="Asai K."/>
            <person name="Machida M."/>
            <person name="Hall N."/>
            <person name="Barrell B.G."/>
            <person name="Denning D.W."/>
        </authorList>
    </citation>
    <scope>NUCLEOTIDE SEQUENCE [LARGE SCALE GENOMIC DNA]</scope>
    <source>
        <strain>ATCC MYA-4609 / CBS 101355 / FGSC A1100 / Af293</strain>
    </source>
</reference>
<reference key="2">
    <citation type="journal article" date="1995" name="Appl. Environ. Microbiol.">
        <title>Aflavinines and other antiinsectan metabolites from the ascostromata of Eupenicillium crustaceum and related species.</title>
        <authorList>
            <person name="Wang H.J."/>
            <person name="Gloer J.B."/>
            <person name="Wicklow D.T."/>
            <person name="Dowd P.F."/>
        </authorList>
    </citation>
    <scope>BIOTECHNOLOGY</scope>
</reference>
<reference key="3">
    <citation type="journal article" date="2008" name="J. Antibiot.">
        <title>Selectivity of pyripyropene derivatives in inhibition toward acyl-CoA:cholesterol acyltransferase 2 isozyme.</title>
        <authorList>
            <person name="Ohshiro T."/>
            <person name="Ohte S."/>
            <person name="Matsuda D."/>
            <person name="Ohtawa M."/>
            <person name="Nagamitsu T."/>
            <person name="Sunazuka T."/>
            <person name="Harigaya Y."/>
            <person name="Rudel L.L."/>
            <person name="Omura S."/>
            <person name="Tomoda H."/>
        </authorList>
    </citation>
    <scope>BIOTECHNOLOGY</scope>
</reference>
<reference key="4">
    <citation type="journal article" date="2009" name="Biol. Pharm. Bull.">
        <title>Pyripyropenes, fungal sesquiterpenes conjugated with alpha-pyrone and pyridine moieties, exhibits anti-angiogenic activity against human umbilical vein endothelial cells.</title>
        <authorList>
            <person name="Hayashi A."/>
            <person name="Arai M."/>
            <person name="Fujita M."/>
            <person name="Kobayashi M."/>
        </authorList>
    </citation>
    <scope>BIOTECHNOLOGY</scope>
</reference>
<reference key="5">
    <citation type="journal article" date="2010" name="Nat. Chem.">
        <title>Reconstitution of a fungal meroterpenoid biosynthesis reveals the involvement of a novel family of terpene cyclases.</title>
        <authorList>
            <person name="Itoh T."/>
            <person name="Tokunaga K."/>
            <person name="Matsuda Y."/>
            <person name="Fujii I."/>
            <person name="Abe I."/>
            <person name="Ebizuka Y."/>
            <person name="Kushiro T."/>
        </authorList>
    </citation>
    <scope>FUNCTION</scope>
    <scope>CATALYTIC ACTIVITY</scope>
    <scope>MUTAGENESIS OF GLU-63 AND ASP-218</scope>
</reference>
<reference key="6">
    <citation type="journal article" date="2011" name="J. Antibiot.">
        <title>Characterization of two cytochrome P450 monooxygenase genes of the pyripyropene biosynthetic gene cluster from Penicillium coprobium.</title>
        <authorList>
            <person name="Hu J."/>
            <person name="Okawa H."/>
            <person name="Yamamoto K."/>
            <person name="Oyama K."/>
            <person name="Mitomi M."/>
            <person name="Anzai H."/>
        </authorList>
    </citation>
    <scope>FUNCTION</scope>
</reference>
<reference key="7">
    <citation type="journal article" date="2014" name="Biotechnol. Biotechnol. Equip.">
        <title>Characterization of two acetyltransferase genes in the pyripyropene biosynthetic gene cluster from Penicillium coprobium.</title>
        <authorList>
            <person name="Hu J."/>
            <person name="Furutani A."/>
            <person name="Yamamoto K."/>
            <person name="Oyama K."/>
            <person name="Mitomi M."/>
            <person name="Anzai H."/>
        </authorList>
    </citation>
    <scope>FUNCTION</scope>
</reference>
<evidence type="ECO:0000255" key="1"/>
<evidence type="ECO:0000269" key="2">
    <source>
    </source>
</evidence>
<evidence type="ECO:0000269" key="3">
    <source>
    </source>
</evidence>
<evidence type="ECO:0000269" key="4">
    <source>
    </source>
</evidence>
<evidence type="ECO:0000269" key="5">
    <source>
    </source>
</evidence>
<evidence type="ECO:0000303" key="6">
    <source>
    </source>
</evidence>
<evidence type="ECO:0000305" key="7"/>
<evidence type="ECO:0000305" key="8">
    <source>
    </source>
</evidence>
<evidence type="ECO:0000305" key="9">
    <source>
    </source>
</evidence>
<dbReference type="EC" id="4.2.3.-" evidence="4"/>
<dbReference type="EMBL" id="AAHF01000006">
    <property type="protein sequence ID" value="EAL89232.1"/>
    <property type="molecule type" value="Genomic_DNA"/>
</dbReference>
<dbReference type="RefSeq" id="XP_751270.1">
    <property type="nucleotide sequence ID" value="XM_746177.1"/>
</dbReference>
<dbReference type="STRING" id="330879.Q4WLD2"/>
<dbReference type="EnsemblFungi" id="EAL89232">
    <property type="protein sequence ID" value="EAL89232"/>
    <property type="gene ID" value="AFUA_6G13950"/>
</dbReference>
<dbReference type="GeneID" id="3508586"/>
<dbReference type="KEGG" id="afm:AFUA_6G13950"/>
<dbReference type="VEuPathDB" id="FungiDB:Afu6g13950"/>
<dbReference type="eggNOG" id="ENOG502RZAD">
    <property type="taxonomic scope" value="Eukaryota"/>
</dbReference>
<dbReference type="HOGENOM" id="CLU_087059_3_0_1"/>
<dbReference type="InParanoid" id="Q4WLD2"/>
<dbReference type="OMA" id="CQLLCRG"/>
<dbReference type="OrthoDB" id="5294024at2759"/>
<dbReference type="UniPathway" id="UPA00213"/>
<dbReference type="Proteomes" id="UP000002530">
    <property type="component" value="Chromosome 6"/>
</dbReference>
<dbReference type="GO" id="GO:0016020">
    <property type="term" value="C:membrane"/>
    <property type="evidence" value="ECO:0007669"/>
    <property type="project" value="UniProtKB-SubCell"/>
</dbReference>
<dbReference type="GO" id="GO:0016829">
    <property type="term" value="F:lyase activity"/>
    <property type="evidence" value="ECO:0007669"/>
    <property type="project" value="UniProtKB-KW"/>
</dbReference>
<dbReference type="GO" id="GO:0016114">
    <property type="term" value="P:terpenoid biosynthetic process"/>
    <property type="evidence" value="ECO:0007669"/>
    <property type="project" value="UniProtKB-UniPathway"/>
</dbReference>
<dbReference type="InterPro" id="IPR039020">
    <property type="entry name" value="PaxB-like"/>
</dbReference>
<dbReference type="PANTHER" id="PTHR42038">
    <property type="match status" value="1"/>
</dbReference>
<dbReference type="PANTHER" id="PTHR42038:SF2">
    <property type="entry name" value="TERPENE CYCLASE AUSL"/>
    <property type="match status" value="1"/>
</dbReference>
<dbReference type="Pfam" id="PF25129">
    <property type="entry name" value="Pyr4-TMTC"/>
    <property type="match status" value="1"/>
</dbReference>
<accession>Q4WLD2</accession>